<evidence type="ECO:0000255" key="1">
    <source>
        <dbReference type="HAMAP-Rule" id="MF_00262"/>
    </source>
</evidence>
<feature type="chain" id="PRO_1000047786" description="Cell division topological specificity factor">
    <location>
        <begin position="1"/>
        <end position="89"/>
    </location>
</feature>
<gene>
    <name evidence="1" type="primary">minE</name>
    <name type="ordered locus">KPN78578_22850</name>
    <name type="ORF">KPN_02320</name>
</gene>
<dbReference type="EMBL" id="CP000647">
    <property type="protein sequence ID" value="ABR77746.1"/>
    <property type="molecule type" value="Genomic_DNA"/>
</dbReference>
<dbReference type="RefSeq" id="WP_002910902.1">
    <property type="nucleotide sequence ID" value="NC_009648.1"/>
</dbReference>
<dbReference type="SMR" id="A6TAX5"/>
<dbReference type="STRING" id="272620.KPN_02320"/>
<dbReference type="jPOST" id="A6TAX5"/>
<dbReference type="PaxDb" id="272620-KPN_02320"/>
<dbReference type="EnsemblBacteria" id="ABR77746">
    <property type="protein sequence ID" value="ABR77746"/>
    <property type="gene ID" value="KPN_02320"/>
</dbReference>
<dbReference type="GeneID" id="97394800"/>
<dbReference type="KEGG" id="kpn:KPN_02320"/>
<dbReference type="HOGENOM" id="CLU_137929_2_2_6"/>
<dbReference type="Proteomes" id="UP000000265">
    <property type="component" value="Chromosome"/>
</dbReference>
<dbReference type="GO" id="GO:0051301">
    <property type="term" value="P:cell division"/>
    <property type="evidence" value="ECO:0007669"/>
    <property type="project" value="UniProtKB-KW"/>
</dbReference>
<dbReference type="GO" id="GO:0032955">
    <property type="term" value="P:regulation of division septum assembly"/>
    <property type="evidence" value="ECO:0007669"/>
    <property type="project" value="InterPro"/>
</dbReference>
<dbReference type="FunFam" id="3.30.1070.10:FF:000001">
    <property type="entry name" value="Cell division topological specificity factor"/>
    <property type="match status" value="1"/>
</dbReference>
<dbReference type="Gene3D" id="3.30.1070.10">
    <property type="entry name" value="Cell division topological specificity factor MinE"/>
    <property type="match status" value="1"/>
</dbReference>
<dbReference type="HAMAP" id="MF_00262">
    <property type="entry name" value="MinE"/>
    <property type="match status" value="1"/>
</dbReference>
<dbReference type="InterPro" id="IPR005527">
    <property type="entry name" value="MinE"/>
</dbReference>
<dbReference type="InterPro" id="IPR036707">
    <property type="entry name" value="MinE_sf"/>
</dbReference>
<dbReference type="NCBIfam" id="TIGR01215">
    <property type="entry name" value="minE"/>
    <property type="match status" value="1"/>
</dbReference>
<dbReference type="NCBIfam" id="NF001422">
    <property type="entry name" value="PRK00296.1"/>
    <property type="match status" value="1"/>
</dbReference>
<dbReference type="Pfam" id="PF03776">
    <property type="entry name" value="MinE"/>
    <property type="match status" value="1"/>
</dbReference>
<dbReference type="SUPFAM" id="SSF55229">
    <property type="entry name" value="Cell division protein MinE topological specificity domain"/>
    <property type="match status" value="1"/>
</dbReference>
<comment type="function">
    <text evidence="1">Prevents the cell division inhibition by proteins MinC and MinD at internal division sites while permitting inhibition at polar sites. This ensures cell division at the proper site by restricting the formation of a division septum at the midpoint of the long axis of the cell.</text>
</comment>
<comment type="similarity">
    <text evidence="1">Belongs to the MinE family.</text>
</comment>
<sequence length="89" mass="10310">MALLDFFLSRKKNTANIAKERLQIIVAERRRGDAEPHYLPQLRKDILEVICKYVQIDPEMVSVQLEQRDGDISILELNVTLPETEESKS</sequence>
<proteinExistence type="inferred from homology"/>
<accession>A6TAX5</accession>
<name>MINE_KLEP7</name>
<organism>
    <name type="scientific">Klebsiella pneumoniae subsp. pneumoniae (strain ATCC 700721 / MGH 78578)</name>
    <dbReference type="NCBI Taxonomy" id="272620"/>
    <lineage>
        <taxon>Bacteria</taxon>
        <taxon>Pseudomonadati</taxon>
        <taxon>Pseudomonadota</taxon>
        <taxon>Gammaproteobacteria</taxon>
        <taxon>Enterobacterales</taxon>
        <taxon>Enterobacteriaceae</taxon>
        <taxon>Klebsiella/Raoultella group</taxon>
        <taxon>Klebsiella</taxon>
        <taxon>Klebsiella pneumoniae complex</taxon>
    </lineage>
</organism>
<reference key="1">
    <citation type="submission" date="2006-09" db="EMBL/GenBank/DDBJ databases">
        <authorList>
            <consortium name="The Klebsiella pneumonia Genome Sequencing Project"/>
            <person name="McClelland M."/>
            <person name="Sanderson E.K."/>
            <person name="Spieth J."/>
            <person name="Clifton W.S."/>
            <person name="Latreille P."/>
            <person name="Sabo A."/>
            <person name="Pepin K."/>
            <person name="Bhonagiri V."/>
            <person name="Porwollik S."/>
            <person name="Ali J."/>
            <person name="Wilson R.K."/>
        </authorList>
    </citation>
    <scope>NUCLEOTIDE SEQUENCE [LARGE SCALE GENOMIC DNA]</scope>
    <source>
        <strain>ATCC 700721 / MGH 78578</strain>
    </source>
</reference>
<protein>
    <recommendedName>
        <fullName evidence="1">Cell division topological specificity factor</fullName>
    </recommendedName>
</protein>
<keyword id="KW-0131">Cell cycle</keyword>
<keyword id="KW-0132">Cell division</keyword>